<reference key="1">
    <citation type="journal article" date="2005" name="Nucleic Acids Res.">
        <title>Genome dynamics and diversity of Shigella species, the etiologic agents of bacillary dysentery.</title>
        <authorList>
            <person name="Yang F."/>
            <person name="Yang J."/>
            <person name="Zhang X."/>
            <person name="Chen L."/>
            <person name="Jiang Y."/>
            <person name="Yan Y."/>
            <person name="Tang X."/>
            <person name="Wang J."/>
            <person name="Xiong Z."/>
            <person name="Dong J."/>
            <person name="Xue Y."/>
            <person name="Zhu Y."/>
            <person name="Xu X."/>
            <person name="Sun L."/>
            <person name="Chen S."/>
            <person name="Nie H."/>
            <person name="Peng J."/>
            <person name="Xu J."/>
            <person name="Wang Y."/>
            <person name="Yuan Z."/>
            <person name="Wen Y."/>
            <person name="Yao Z."/>
            <person name="Shen Y."/>
            <person name="Qiang B."/>
            <person name="Hou Y."/>
            <person name="Yu J."/>
            <person name="Jin Q."/>
        </authorList>
    </citation>
    <scope>NUCLEOTIDE SEQUENCE [LARGE SCALE GENOMIC DNA]</scope>
    <source>
        <strain>Sd197</strain>
    </source>
</reference>
<accession>Q32BG3</accession>
<protein>
    <recommendedName>
        <fullName evidence="1">Ribosome maturation factor RimP</fullName>
    </recommendedName>
</protein>
<gene>
    <name evidence="1" type="primary">rimP</name>
    <name type="ordered locus">SDY_3349</name>
</gene>
<sequence>MGLSTLEQKLTEMITAPVEALGFELVGIEFIRGRTSTLRIYIDSEDGINVDDCADVSHQVSAVLDVEDPITVAYNLEVSSPGLDRPLFTAEHYARFVGEEVTLVLRMAVQNRRKWQGVIKAVDGEMITVTVEGKDEVFALSNIQKANLVPHF</sequence>
<feature type="chain" id="PRO_0000229277" description="Ribosome maturation factor RimP">
    <location>
        <begin position="1"/>
        <end position="152"/>
    </location>
</feature>
<evidence type="ECO:0000255" key="1">
    <source>
        <dbReference type="HAMAP-Rule" id="MF_01077"/>
    </source>
</evidence>
<dbReference type="EMBL" id="CP000034">
    <property type="protein sequence ID" value="ABB63342.1"/>
    <property type="molecule type" value="Genomic_DNA"/>
</dbReference>
<dbReference type="SMR" id="Q32BG3"/>
<dbReference type="STRING" id="300267.SDY_3349"/>
<dbReference type="EnsemblBacteria" id="ABB63342">
    <property type="protein sequence ID" value="ABB63342"/>
    <property type="gene ID" value="SDY_3349"/>
</dbReference>
<dbReference type="KEGG" id="sdy:SDY_3349"/>
<dbReference type="HOGENOM" id="CLU_070525_1_1_6"/>
<dbReference type="Proteomes" id="UP000002716">
    <property type="component" value="Chromosome"/>
</dbReference>
<dbReference type="GO" id="GO:0005829">
    <property type="term" value="C:cytosol"/>
    <property type="evidence" value="ECO:0007669"/>
    <property type="project" value="TreeGrafter"/>
</dbReference>
<dbReference type="GO" id="GO:0000028">
    <property type="term" value="P:ribosomal small subunit assembly"/>
    <property type="evidence" value="ECO:0007669"/>
    <property type="project" value="TreeGrafter"/>
</dbReference>
<dbReference type="GO" id="GO:0006412">
    <property type="term" value="P:translation"/>
    <property type="evidence" value="ECO:0007669"/>
    <property type="project" value="TreeGrafter"/>
</dbReference>
<dbReference type="CDD" id="cd01734">
    <property type="entry name" value="YlxS_C"/>
    <property type="match status" value="1"/>
</dbReference>
<dbReference type="FunFam" id="2.30.30.180:FF:000001">
    <property type="entry name" value="Ribosome maturation factor RimP"/>
    <property type="match status" value="1"/>
</dbReference>
<dbReference type="FunFam" id="3.30.300.70:FF:000001">
    <property type="entry name" value="Ribosome maturation factor RimP"/>
    <property type="match status" value="1"/>
</dbReference>
<dbReference type="Gene3D" id="2.30.30.180">
    <property type="entry name" value="Ribosome maturation factor RimP, C-terminal domain"/>
    <property type="match status" value="1"/>
</dbReference>
<dbReference type="Gene3D" id="3.30.300.70">
    <property type="entry name" value="RimP-like superfamily, N-terminal"/>
    <property type="match status" value="1"/>
</dbReference>
<dbReference type="HAMAP" id="MF_01077">
    <property type="entry name" value="RimP"/>
    <property type="match status" value="1"/>
</dbReference>
<dbReference type="InterPro" id="IPR003728">
    <property type="entry name" value="Ribosome_maturation_RimP"/>
</dbReference>
<dbReference type="InterPro" id="IPR028998">
    <property type="entry name" value="RimP_C"/>
</dbReference>
<dbReference type="InterPro" id="IPR036847">
    <property type="entry name" value="RimP_C_sf"/>
</dbReference>
<dbReference type="InterPro" id="IPR028989">
    <property type="entry name" value="RimP_N"/>
</dbReference>
<dbReference type="InterPro" id="IPR035956">
    <property type="entry name" value="RimP_N_sf"/>
</dbReference>
<dbReference type="NCBIfam" id="NF000927">
    <property type="entry name" value="PRK00092.1-1"/>
    <property type="match status" value="1"/>
</dbReference>
<dbReference type="PANTHER" id="PTHR33867">
    <property type="entry name" value="RIBOSOME MATURATION FACTOR RIMP"/>
    <property type="match status" value="1"/>
</dbReference>
<dbReference type="PANTHER" id="PTHR33867:SF1">
    <property type="entry name" value="RIBOSOME MATURATION FACTOR RIMP"/>
    <property type="match status" value="1"/>
</dbReference>
<dbReference type="Pfam" id="PF17384">
    <property type="entry name" value="DUF150_C"/>
    <property type="match status" value="1"/>
</dbReference>
<dbReference type="Pfam" id="PF02576">
    <property type="entry name" value="RimP_N"/>
    <property type="match status" value="1"/>
</dbReference>
<dbReference type="SUPFAM" id="SSF74942">
    <property type="entry name" value="YhbC-like, C-terminal domain"/>
    <property type="match status" value="1"/>
</dbReference>
<dbReference type="SUPFAM" id="SSF75420">
    <property type="entry name" value="YhbC-like, N-terminal domain"/>
    <property type="match status" value="1"/>
</dbReference>
<comment type="function">
    <text evidence="1">Required for maturation of 30S ribosomal subunits.</text>
</comment>
<comment type="subcellular location">
    <subcellularLocation>
        <location evidence="1">Cytoplasm</location>
    </subcellularLocation>
</comment>
<comment type="similarity">
    <text evidence="1">Belongs to the RimP family.</text>
</comment>
<name>RIMP_SHIDS</name>
<keyword id="KW-0963">Cytoplasm</keyword>
<keyword id="KW-1185">Reference proteome</keyword>
<keyword id="KW-0690">Ribosome biogenesis</keyword>
<proteinExistence type="inferred from homology"/>
<organism>
    <name type="scientific">Shigella dysenteriae serotype 1 (strain Sd197)</name>
    <dbReference type="NCBI Taxonomy" id="300267"/>
    <lineage>
        <taxon>Bacteria</taxon>
        <taxon>Pseudomonadati</taxon>
        <taxon>Pseudomonadota</taxon>
        <taxon>Gammaproteobacteria</taxon>
        <taxon>Enterobacterales</taxon>
        <taxon>Enterobacteriaceae</taxon>
        <taxon>Shigella</taxon>
    </lineage>
</organism>